<feature type="chain" id="PRO_1000085642" description="Uracil phosphoribosyltransferase">
    <location>
        <begin position="1"/>
        <end position="209"/>
    </location>
</feature>
<feature type="binding site" evidence="1">
    <location>
        <position position="79"/>
    </location>
    <ligand>
        <name>5-phospho-alpha-D-ribose 1-diphosphate</name>
        <dbReference type="ChEBI" id="CHEBI:58017"/>
    </ligand>
</feature>
<feature type="binding site" evidence="1">
    <location>
        <position position="104"/>
    </location>
    <ligand>
        <name>5-phospho-alpha-D-ribose 1-diphosphate</name>
        <dbReference type="ChEBI" id="CHEBI:58017"/>
    </ligand>
</feature>
<feature type="binding site" evidence="1">
    <location>
        <begin position="131"/>
        <end position="139"/>
    </location>
    <ligand>
        <name>5-phospho-alpha-D-ribose 1-diphosphate</name>
        <dbReference type="ChEBI" id="CHEBI:58017"/>
    </ligand>
</feature>
<feature type="binding site" evidence="1">
    <location>
        <position position="194"/>
    </location>
    <ligand>
        <name>uracil</name>
        <dbReference type="ChEBI" id="CHEBI:17568"/>
    </ligand>
</feature>
<feature type="binding site" evidence="1">
    <location>
        <begin position="199"/>
        <end position="201"/>
    </location>
    <ligand>
        <name>uracil</name>
        <dbReference type="ChEBI" id="CHEBI:17568"/>
    </ligand>
</feature>
<feature type="binding site" evidence="1">
    <location>
        <position position="200"/>
    </location>
    <ligand>
        <name>5-phospho-alpha-D-ribose 1-diphosphate</name>
        <dbReference type="ChEBI" id="CHEBI:58017"/>
    </ligand>
</feature>
<gene>
    <name evidence="1" type="primary">upp</name>
    <name type="ordered locus">SaurJH1_2186</name>
</gene>
<comment type="function">
    <text evidence="1">Catalyzes the conversion of uracil and 5-phospho-alpha-D-ribose 1-diphosphate (PRPP) to UMP and diphosphate.</text>
</comment>
<comment type="catalytic activity">
    <reaction evidence="1">
        <text>UMP + diphosphate = 5-phospho-alpha-D-ribose 1-diphosphate + uracil</text>
        <dbReference type="Rhea" id="RHEA:13017"/>
        <dbReference type="ChEBI" id="CHEBI:17568"/>
        <dbReference type="ChEBI" id="CHEBI:33019"/>
        <dbReference type="ChEBI" id="CHEBI:57865"/>
        <dbReference type="ChEBI" id="CHEBI:58017"/>
        <dbReference type="EC" id="2.4.2.9"/>
    </reaction>
</comment>
<comment type="cofactor">
    <cofactor evidence="1">
        <name>Mg(2+)</name>
        <dbReference type="ChEBI" id="CHEBI:18420"/>
    </cofactor>
    <text evidence="1">Binds 1 Mg(2+) ion per subunit. The magnesium is bound as Mg-PRPP.</text>
</comment>
<comment type="activity regulation">
    <text evidence="1">Allosterically activated by GTP.</text>
</comment>
<comment type="pathway">
    <text evidence="1">Pyrimidine metabolism; UMP biosynthesis via salvage pathway; UMP from uracil: step 1/1.</text>
</comment>
<comment type="similarity">
    <text evidence="1">Belongs to the UPRTase family.</text>
</comment>
<evidence type="ECO:0000255" key="1">
    <source>
        <dbReference type="HAMAP-Rule" id="MF_01218"/>
    </source>
</evidence>
<keyword id="KW-0021">Allosteric enzyme</keyword>
<keyword id="KW-0328">Glycosyltransferase</keyword>
<keyword id="KW-0342">GTP-binding</keyword>
<keyword id="KW-0460">Magnesium</keyword>
<keyword id="KW-0547">Nucleotide-binding</keyword>
<keyword id="KW-0808">Transferase</keyword>
<accession>A6U3J7</accession>
<name>UPP_STAA2</name>
<proteinExistence type="inferred from homology"/>
<organism>
    <name type="scientific">Staphylococcus aureus (strain JH1)</name>
    <dbReference type="NCBI Taxonomy" id="359787"/>
    <lineage>
        <taxon>Bacteria</taxon>
        <taxon>Bacillati</taxon>
        <taxon>Bacillota</taxon>
        <taxon>Bacilli</taxon>
        <taxon>Bacillales</taxon>
        <taxon>Staphylococcaceae</taxon>
        <taxon>Staphylococcus</taxon>
    </lineage>
</organism>
<dbReference type="EC" id="2.4.2.9" evidence="1"/>
<dbReference type="EMBL" id="CP000736">
    <property type="protein sequence ID" value="ABR53015.1"/>
    <property type="molecule type" value="Genomic_DNA"/>
</dbReference>
<dbReference type="SMR" id="A6U3J7"/>
<dbReference type="KEGG" id="sah:SaurJH1_2186"/>
<dbReference type="HOGENOM" id="CLU_067096_2_2_9"/>
<dbReference type="UniPathway" id="UPA00574">
    <property type="reaction ID" value="UER00636"/>
</dbReference>
<dbReference type="GO" id="GO:0005525">
    <property type="term" value="F:GTP binding"/>
    <property type="evidence" value="ECO:0007669"/>
    <property type="project" value="UniProtKB-KW"/>
</dbReference>
<dbReference type="GO" id="GO:0000287">
    <property type="term" value="F:magnesium ion binding"/>
    <property type="evidence" value="ECO:0007669"/>
    <property type="project" value="UniProtKB-UniRule"/>
</dbReference>
<dbReference type="GO" id="GO:0004845">
    <property type="term" value="F:uracil phosphoribosyltransferase activity"/>
    <property type="evidence" value="ECO:0007669"/>
    <property type="project" value="UniProtKB-UniRule"/>
</dbReference>
<dbReference type="GO" id="GO:0044206">
    <property type="term" value="P:UMP salvage"/>
    <property type="evidence" value="ECO:0007669"/>
    <property type="project" value="UniProtKB-UniRule"/>
</dbReference>
<dbReference type="GO" id="GO:0006223">
    <property type="term" value="P:uracil salvage"/>
    <property type="evidence" value="ECO:0007669"/>
    <property type="project" value="InterPro"/>
</dbReference>
<dbReference type="CDD" id="cd06223">
    <property type="entry name" value="PRTases_typeI"/>
    <property type="match status" value="1"/>
</dbReference>
<dbReference type="FunFam" id="3.40.50.2020:FF:000003">
    <property type="entry name" value="Uracil phosphoribosyltransferase"/>
    <property type="match status" value="1"/>
</dbReference>
<dbReference type="Gene3D" id="3.40.50.2020">
    <property type="match status" value="1"/>
</dbReference>
<dbReference type="HAMAP" id="MF_01218_B">
    <property type="entry name" value="Upp_B"/>
    <property type="match status" value="1"/>
</dbReference>
<dbReference type="InterPro" id="IPR000836">
    <property type="entry name" value="PRibTrfase_dom"/>
</dbReference>
<dbReference type="InterPro" id="IPR029057">
    <property type="entry name" value="PRTase-like"/>
</dbReference>
<dbReference type="InterPro" id="IPR034332">
    <property type="entry name" value="Upp_B"/>
</dbReference>
<dbReference type="InterPro" id="IPR050054">
    <property type="entry name" value="UPRTase/APRTase"/>
</dbReference>
<dbReference type="InterPro" id="IPR005765">
    <property type="entry name" value="Ura_phspho_trans"/>
</dbReference>
<dbReference type="NCBIfam" id="NF001097">
    <property type="entry name" value="PRK00129.1"/>
    <property type="match status" value="1"/>
</dbReference>
<dbReference type="NCBIfam" id="TIGR01091">
    <property type="entry name" value="upp"/>
    <property type="match status" value="1"/>
</dbReference>
<dbReference type="PANTHER" id="PTHR32315">
    <property type="entry name" value="ADENINE PHOSPHORIBOSYLTRANSFERASE"/>
    <property type="match status" value="1"/>
</dbReference>
<dbReference type="PANTHER" id="PTHR32315:SF4">
    <property type="entry name" value="URACIL PHOSPHORIBOSYLTRANSFERASE, CHLOROPLASTIC"/>
    <property type="match status" value="1"/>
</dbReference>
<dbReference type="Pfam" id="PF14681">
    <property type="entry name" value="UPRTase"/>
    <property type="match status" value="1"/>
</dbReference>
<dbReference type="SUPFAM" id="SSF53271">
    <property type="entry name" value="PRTase-like"/>
    <property type="match status" value="1"/>
</dbReference>
<reference key="1">
    <citation type="submission" date="2007-06" db="EMBL/GenBank/DDBJ databases">
        <title>Complete sequence of chromosome of Staphylococcus aureus subsp. aureus JH1.</title>
        <authorList>
            <consortium name="US DOE Joint Genome Institute"/>
            <person name="Copeland A."/>
            <person name="Lucas S."/>
            <person name="Lapidus A."/>
            <person name="Barry K."/>
            <person name="Detter J.C."/>
            <person name="Glavina del Rio T."/>
            <person name="Hammon N."/>
            <person name="Israni S."/>
            <person name="Dalin E."/>
            <person name="Tice H."/>
            <person name="Pitluck S."/>
            <person name="Chain P."/>
            <person name="Malfatti S."/>
            <person name="Shin M."/>
            <person name="Vergez L."/>
            <person name="Schmutz J."/>
            <person name="Larimer F."/>
            <person name="Land M."/>
            <person name="Hauser L."/>
            <person name="Kyrpides N."/>
            <person name="Ivanova N."/>
            <person name="Tomasz A."/>
            <person name="Richardson P."/>
        </authorList>
    </citation>
    <scope>NUCLEOTIDE SEQUENCE [LARGE SCALE GENOMIC DNA]</scope>
    <source>
        <strain>JH1</strain>
    </source>
</reference>
<sequence length="209" mass="23050">MSKVHVFDHPLIQHKLSYIRDVNTGTKEFRELVDEVGMLMAYEVTRDLELQDVDIETPVTKMTAKRLAGKKLAIVPILRAGLGMTDGILSLVPAARVGHIGLYRDPETLKAVEYFAKLPQDITERQIIVVDPMLATGASAIEAITSLKKRGAKNIRFMCLIAAPEGVEKMHEAHPDVDIYIAALDEKLNDKAYITPGLGDAGDRLFGTK</sequence>
<protein>
    <recommendedName>
        <fullName evidence="1">Uracil phosphoribosyltransferase</fullName>
        <ecNumber evidence="1">2.4.2.9</ecNumber>
    </recommendedName>
    <alternativeName>
        <fullName evidence="1">UMP pyrophosphorylase</fullName>
    </alternativeName>
    <alternativeName>
        <fullName evidence="1">UPRTase</fullName>
    </alternativeName>
</protein>